<dbReference type="EMBL" id="AP006716">
    <property type="protein sequence ID" value="BAE04452.1"/>
    <property type="molecule type" value="Genomic_DNA"/>
</dbReference>
<dbReference type="SMR" id="Q4L7C3"/>
<dbReference type="KEGG" id="sha:SH1143"/>
<dbReference type="eggNOG" id="COG0239">
    <property type="taxonomic scope" value="Bacteria"/>
</dbReference>
<dbReference type="HOGENOM" id="CLU_114342_3_3_9"/>
<dbReference type="OrthoDB" id="9799631at2"/>
<dbReference type="Proteomes" id="UP000000543">
    <property type="component" value="Chromosome"/>
</dbReference>
<dbReference type="GO" id="GO:0005886">
    <property type="term" value="C:plasma membrane"/>
    <property type="evidence" value="ECO:0007669"/>
    <property type="project" value="UniProtKB-SubCell"/>
</dbReference>
<dbReference type="GO" id="GO:0062054">
    <property type="term" value="F:fluoride channel activity"/>
    <property type="evidence" value="ECO:0007669"/>
    <property type="project" value="UniProtKB-UniRule"/>
</dbReference>
<dbReference type="GO" id="GO:0046872">
    <property type="term" value="F:metal ion binding"/>
    <property type="evidence" value="ECO:0007669"/>
    <property type="project" value="UniProtKB-KW"/>
</dbReference>
<dbReference type="GO" id="GO:0140114">
    <property type="term" value="P:cellular detoxification of fluoride"/>
    <property type="evidence" value="ECO:0007669"/>
    <property type="project" value="UniProtKB-UniRule"/>
</dbReference>
<dbReference type="HAMAP" id="MF_00454">
    <property type="entry name" value="FluC"/>
    <property type="match status" value="1"/>
</dbReference>
<dbReference type="InterPro" id="IPR003691">
    <property type="entry name" value="FluC"/>
</dbReference>
<dbReference type="NCBIfam" id="NF010797">
    <property type="entry name" value="PRK14201.1"/>
    <property type="match status" value="1"/>
</dbReference>
<dbReference type="PANTHER" id="PTHR28259">
    <property type="entry name" value="FLUORIDE EXPORT PROTEIN 1-RELATED"/>
    <property type="match status" value="1"/>
</dbReference>
<dbReference type="PANTHER" id="PTHR28259:SF16">
    <property type="entry name" value="FLUORIDE-SPECIFIC ION CHANNEL FLUC 2"/>
    <property type="match status" value="1"/>
</dbReference>
<dbReference type="Pfam" id="PF02537">
    <property type="entry name" value="CRCB"/>
    <property type="match status" value="1"/>
</dbReference>
<evidence type="ECO:0000255" key="1">
    <source>
        <dbReference type="HAMAP-Rule" id="MF_00454"/>
    </source>
</evidence>
<proteinExistence type="inferred from homology"/>
<gene>
    <name evidence="1" type="primary">fluC2</name>
    <name evidence="1" type="synonym">crcB2</name>
    <name type="ordered locus">SH1143</name>
</gene>
<sequence>MQYLFVFIGGLFGALLRYVLSTLNVDSGLPLGTLIANIVGAFLMGYLSSLSIHFFKNNPLIKKGVTTGLLGALTTFSTFQFELVTMSQNNSIALLFIYGLTSYIGGILFCWFGVKLGGQPT</sequence>
<organism>
    <name type="scientific">Staphylococcus haemolyticus (strain JCSC1435)</name>
    <dbReference type="NCBI Taxonomy" id="279808"/>
    <lineage>
        <taxon>Bacteria</taxon>
        <taxon>Bacillati</taxon>
        <taxon>Bacillota</taxon>
        <taxon>Bacilli</taxon>
        <taxon>Bacillales</taxon>
        <taxon>Staphylococcaceae</taxon>
        <taxon>Staphylococcus</taxon>
    </lineage>
</organism>
<keyword id="KW-1003">Cell membrane</keyword>
<keyword id="KW-0407">Ion channel</keyword>
<keyword id="KW-0406">Ion transport</keyword>
<keyword id="KW-0472">Membrane</keyword>
<keyword id="KW-0479">Metal-binding</keyword>
<keyword id="KW-0915">Sodium</keyword>
<keyword id="KW-0812">Transmembrane</keyword>
<keyword id="KW-1133">Transmembrane helix</keyword>
<keyword id="KW-0813">Transport</keyword>
<feature type="chain" id="PRO_0000252947" description="Fluoride-specific ion channel FluC 2">
    <location>
        <begin position="1"/>
        <end position="121"/>
    </location>
</feature>
<feature type="transmembrane region" description="Helical" evidence="1">
    <location>
        <begin position="3"/>
        <end position="23"/>
    </location>
</feature>
<feature type="transmembrane region" description="Helical" evidence="1">
    <location>
        <begin position="27"/>
        <end position="47"/>
    </location>
</feature>
<feature type="transmembrane region" description="Helical" evidence="1">
    <location>
        <begin position="64"/>
        <end position="84"/>
    </location>
</feature>
<feature type="transmembrane region" description="Helical" evidence="1">
    <location>
        <begin position="92"/>
        <end position="112"/>
    </location>
</feature>
<feature type="binding site" evidence="1">
    <location>
        <position position="71"/>
    </location>
    <ligand>
        <name>Na(+)</name>
        <dbReference type="ChEBI" id="CHEBI:29101"/>
        <note>structural</note>
    </ligand>
</feature>
<feature type="binding site" evidence="1">
    <location>
        <position position="74"/>
    </location>
    <ligand>
        <name>Na(+)</name>
        <dbReference type="ChEBI" id="CHEBI:29101"/>
        <note>structural</note>
    </ligand>
</feature>
<accession>Q4L7C3</accession>
<protein>
    <recommendedName>
        <fullName evidence="1">Fluoride-specific ion channel FluC 2</fullName>
    </recommendedName>
</protein>
<reference key="1">
    <citation type="journal article" date="2005" name="J. Bacteriol.">
        <title>Whole-genome sequencing of Staphylococcus haemolyticus uncovers the extreme plasticity of its genome and the evolution of human-colonizing staphylococcal species.</title>
        <authorList>
            <person name="Takeuchi F."/>
            <person name="Watanabe S."/>
            <person name="Baba T."/>
            <person name="Yuzawa H."/>
            <person name="Ito T."/>
            <person name="Morimoto Y."/>
            <person name="Kuroda M."/>
            <person name="Cui L."/>
            <person name="Takahashi M."/>
            <person name="Ankai A."/>
            <person name="Baba S."/>
            <person name="Fukui S."/>
            <person name="Lee J.C."/>
            <person name="Hiramatsu K."/>
        </authorList>
    </citation>
    <scope>NUCLEOTIDE SEQUENCE [LARGE SCALE GENOMIC DNA]</scope>
    <source>
        <strain>JCSC1435</strain>
    </source>
</reference>
<comment type="function">
    <text evidence="1">Fluoride-specific ion channel. Important for reducing fluoride concentration in the cell, thus reducing its toxicity.</text>
</comment>
<comment type="catalytic activity">
    <reaction evidence="1">
        <text>fluoride(in) = fluoride(out)</text>
        <dbReference type="Rhea" id="RHEA:76159"/>
        <dbReference type="ChEBI" id="CHEBI:17051"/>
    </reaction>
    <physiologicalReaction direction="left-to-right" evidence="1">
        <dbReference type="Rhea" id="RHEA:76160"/>
    </physiologicalReaction>
</comment>
<comment type="activity regulation">
    <text evidence="1">Na(+) is not transported, but it plays an essential structural role and its presence is essential for fluoride channel function.</text>
</comment>
<comment type="subcellular location">
    <subcellularLocation>
        <location evidence="1">Cell membrane</location>
        <topology evidence="1">Multi-pass membrane protein</topology>
    </subcellularLocation>
</comment>
<comment type="similarity">
    <text evidence="1">Belongs to the fluoride channel Fluc/FEX (TC 1.A.43) family.</text>
</comment>
<name>FLUC2_STAHJ</name>